<comment type="similarity">
    <text evidence="1">Belongs to the UPF0145 family.</text>
</comment>
<keyword id="KW-1185">Reference proteome</keyword>
<sequence>MQFSTTPTLEGQTIVEYCGVVTGEAILGANIFRDFFAGIRDIVGGRSGAYEKELRKAREIAFEELGSQARALGADAVVGIDIDYETVGQNGSMLMVSVSGTAVKTRR</sequence>
<evidence type="ECO:0000255" key="1">
    <source>
        <dbReference type="HAMAP-Rule" id="MF_00338"/>
    </source>
</evidence>
<accession>A7ZJT5</accession>
<name>YBJQ_ECO24</name>
<feature type="chain" id="PRO_1000059728" description="UPF0145 protein YbjQ">
    <location>
        <begin position="1"/>
        <end position="107"/>
    </location>
</feature>
<reference key="1">
    <citation type="journal article" date="2008" name="J. Bacteriol.">
        <title>The pangenome structure of Escherichia coli: comparative genomic analysis of E. coli commensal and pathogenic isolates.</title>
        <authorList>
            <person name="Rasko D.A."/>
            <person name="Rosovitz M.J."/>
            <person name="Myers G.S.A."/>
            <person name="Mongodin E.F."/>
            <person name="Fricke W.F."/>
            <person name="Gajer P."/>
            <person name="Crabtree J."/>
            <person name="Sebaihia M."/>
            <person name="Thomson N.R."/>
            <person name="Chaudhuri R."/>
            <person name="Henderson I.R."/>
            <person name="Sperandio V."/>
            <person name="Ravel J."/>
        </authorList>
    </citation>
    <scope>NUCLEOTIDE SEQUENCE [LARGE SCALE GENOMIC DNA]</scope>
    <source>
        <strain>E24377A / ETEC</strain>
    </source>
</reference>
<proteinExistence type="inferred from homology"/>
<organism>
    <name type="scientific">Escherichia coli O139:H28 (strain E24377A / ETEC)</name>
    <dbReference type="NCBI Taxonomy" id="331111"/>
    <lineage>
        <taxon>Bacteria</taxon>
        <taxon>Pseudomonadati</taxon>
        <taxon>Pseudomonadota</taxon>
        <taxon>Gammaproteobacteria</taxon>
        <taxon>Enterobacterales</taxon>
        <taxon>Enterobacteriaceae</taxon>
        <taxon>Escherichia</taxon>
    </lineage>
</organism>
<gene>
    <name evidence="1" type="primary">ybjQ</name>
    <name type="ordered locus">EcE24377A_0939</name>
</gene>
<dbReference type="EMBL" id="CP000800">
    <property type="protein sequence ID" value="ABV21057.1"/>
    <property type="molecule type" value="Genomic_DNA"/>
</dbReference>
<dbReference type="RefSeq" id="WP_001160737.1">
    <property type="nucleotide sequence ID" value="NC_009801.1"/>
</dbReference>
<dbReference type="SMR" id="A7ZJT5"/>
<dbReference type="KEGG" id="ecw:EcE24377A_0939"/>
<dbReference type="HOGENOM" id="CLU_117144_3_0_6"/>
<dbReference type="Proteomes" id="UP000001122">
    <property type="component" value="Chromosome"/>
</dbReference>
<dbReference type="Gene3D" id="3.30.110.70">
    <property type="entry name" value="Hypothetical protein apc22750. Chain B"/>
    <property type="match status" value="1"/>
</dbReference>
<dbReference type="HAMAP" id="MF_00338">
    <property type="entry name" value="UPF0145"/>
    <property type="match status" value="1"/>
</dbReference>
<dbReference type="InterPro" id="IPR035439">
    <property type="entry name" value="UPF0145_dom_sf"/>
</dbReference>
<dbReference type="InterPro" id="IPR002765">
    <property type="entry name" value="UPF0145_YbjQ-like"/>
</dbReference>
<dbReference type="NCBIfam" id="NF002776">
    <property type="entry name" value="PRK02877.1"/>
    <property type="match status" value="1"/>
</dbReference>
<dbReference type="PANTHER" id="PTHR34068">
    <property type="entry name" value="UPF0145 PROTEIN YBJQ"/>
    <property type="match status" value="1"/>
</dbReference>
<dbReference type="PANTHER" id="PTHR34068:SF1">
    <property type="entry name" value="UPF0145 PROTEIN YBJQ"/>
    <property type="match status" value="1"/>
</dbReference>
<dbReference type="Pfam" id="PF01906">
    <property type="entry name" value="YbjQ_1"/>
    <property type="match status" value="1"/>
</dbReference>
<dbReference type="SUPFAM" id="SSF117782">
    <property type="entry name" value="YbjQ-like"/>
    <property type="match status" value="1"/>
</dbReference>
<protein>
    <recommendedName>
        <fullName evidence="1">UPF0145 protein YbjQ</fullName>
    </recommendedName>
</protein>